<comment type="function">
    <text evidence="1">Allows the formation of correctly charged Asn-tRNA(Asn) or Gln-tRNA(Gln) through the transamidation of misacylated Asp-tRNA(Asn) or Glu-tRNA(Gln) in organisms which lack either or both of asparaginyl-tRNA or glutaminyl-tRNA synthetases. The reaction takes place in the presence of glutamine and ATP through an activated phospho-Asp-tRNA(Asn) or phospho-Glu-tRNA(Gln).</text>
</comment>
<comment type="catalytic activity">
    <reaction evidence="1">
        <text>L-glutamyl-tRNA(Gln) + L-glutamine + ATP + H2O = L-glutaminyl-tRNA(Gln) + L-glutamate + ADP + phosphate + H(+)</text>
        <dbReference type="Rhea" id="RHEA:17521"/>
        <dbReference type="Rhea" id="RHEA-COMP:9681"/>
        <dbReference type="Rhea" id="RHEA-COMP:9684"/>
        <dbReference type="ChEBI" id="CHEBI:15377"/>
        <dbReference type="ChEBI" id="CHEBI:15378"/>
        <dbReference type="ChEBI" id="CHEBI:29985"/>
        <dbReference type="ChEBI" id="CHEBI:30616"/>
        <dbReference type="ChEBI" id="CHEBI:43474"/>
        <dbReference type="ChEBI" id="CHEBI:58359"/>
        <dbReference type="ChEBI" id="CHEBI:78520"/>
        <dbReference type="ChEBI" id="CHEBI:78521"/>
        <dbReference type="ChEBI" id="CHEBI:456216"/>
    </reaction>
</comment>
<comment type="catalytic activity">
    <reaction evidence="1">
        <text>L-aspartyl-tRNA(Asn) + L-glutamine + ATP + H2O = L-asparaginyl-tRNA(Asn) + L-glutamate + ADP + phosphate + 2 H(+)</text>
        <dbReference type="Rhea" id="RHEA:14513"/>
        <dbReference type="Rhea" id="RHEA-COMP:9674"/>
        <dbReference type="Rhea" id="RHEA-COMP:9677"/>
        <dbReference type="ChEBI" id="CHEBI:15377"/>
        <dbReference type="ChEBI" id="CHEBI:15378"/>
        <dbReference type="ChEBI" id="CHEBI:29985"/>
        <dbReference type="ChEBI" id="CHEBI:30616"/>
        <dbReference type="ChEBI" id="CHEBI:43474"/>
        <dbReference type="ChEBI" id="CHEBI:58359"/>
        <dbReference type="ChEBI" id="CHEBI:78515"/>
        <dbReference type="ChEBI" id="CHEBI:78516"/>
        <dbReference type="ChEBI" id="CHEBI:456216"/>
    </reaction>
</comment>
<comment type="subunit">
    <text evidence="1">Heterotrimer of A, B and C subunits.</text>
</comment>
<comment type="similarity">
    <text evidence="1">Belongs to the GatB/GatE family. GatB subfamily.</text>
</comment>
<sequence>MHFETVIGLEVHVELKTDSKMFSPSPAHFGAEPNSNTNVIDLAYPGVLPVVNKRAVDWAMRAAMALNMEIATESKFDRKNYFYPDNPKAYQISQFDQPIGENGYIDIEVDGETKRIGITRLHMEEDAGKSTHKGEYSLVDLNRQGTPLIEIVSEPDIRSPKEAYAYLEKLRSIIQYTGVSDVKMEEGSLRCDANISLRPYGQEKFGTKAELKNLNSFNYVRKGLEYEEKRQEEELLNGGEIGQETRRFDESTGKTILMRVKEGSDDYRYFPEPDIVPLYIDDAWKERVRQTIPELPDERKAKYVNELGLPAYDAHVLTLTKEMSDFFESTIEHGADVKLTSNWLMGGVNEYLNKNQVELLDTKLTPENLAGMIKLIEDGTMSSKIAKKVFPELAAKGGNAKQIMEDNGLVQISDEATLLKFVNEALDNNEQSVEDYKNGKGKAMGFLVGQIMKASKGQANPQLVNQLLKQELDKR</sequence>
<evidence type="ECO:0000255" key="1">
    <source>
        <dbReference type="HAMAP-Rule" id="MF_00121"/>
    </source>
</evidence>
<protein>
    <recommendedName>
        <fullName evidence="1">Aspartyl/glutamyl-tRNA(Asn/Gln) amidotransferase subunit B</fullName>
        <shortName evidence="1">Asp/Glu-ADT subunit B</shortName>
        <ecNumber evidence="1">6.3.5.-</ecNumber>
    </recommendedName>
</protein>
<name>GATB_STAAE</name>
<keyword id="KW-0067">ATP-binding</keyword>
<keyword id="KW-0436">Ligase</keyword>
<keyword id="KW-0547">Nucleotide-binding</keyword>
<keyword id="KW-0648">Protein biosynthesis</keyword>
<feature type="chain" id="PRO_1000071376" description="Aspartyl/glutamyl-tRNA(Asn/Gln) amidotransferase subunit B">
    <location>
        <begin position="1"/>
        <end position="475"/>
    </location>
</feature>
<organism>
    <name type="scientific">Staphylococcus aureus (strain Newman)</name>
    <dbReference type="NCBI Taxonomy" id="426430"/>
    <lineage>
        <taxon>Bacteria</taxon>
        <taxon>Bacillati</taxon>
        <taxon>Bacillota</taxon>
        <taxon>Bacilli</taxon>
        <taxon>Bacillales</taxon>
        <taxon>Staphylococcaceae</taxon>
        <taxon>Staphylococcus</taxon>
    </lineage>
</organism>
<proteinExistence type="inferred from homology"/>
<reference key="1">
    <citation type="journal article" date="2008" name="J. Bacteriol.">
        <title>Genome sequence of Staphylococcus aureus strain Newman and comparative analysis of staphylococcal genomes: polymorphism and evolution of two major pathogenicity islands.</title>
        <authorList>
            <person name="Baba T."/>
            <person name="Bae T."/>
            <person name="Schneewind O."/>
            <person name="Takeuchi F."/>
            <person name="Hiramatsu K."/>
        </authorList>
    </citation>
    <scope>NUCLEOTIDE SEQUENCE [LARGE SCALE GENOMIC DNA]</scope>
    <source>
        <strain>Newman</strain>
    </source>
</reference>
<dbReference type="EC" id="6.3.5.-" evidence="1"/>
<dbReference type="EMBL" id="AP009351">
    <property type="protein sequence ID" value="BAF68109.1"/>
    <property type="molecule type" value="Genomic_DNA"/>
</dbReference>
<dbReference type="RefSeq" id="WP_000545370.1">
    <property type="nucleotide sequence ID" value="NZ_JBBIAE010000010.1"/>
</dbReference>
<dbReference type="SMR" id="A6QIC7"/>
<dbReference type="KEGG" id="sae:NWMN_1837"/>
<dbReference type="HOGENOM" id="CLU_019240_0_0_9"/>
<dbReference type="Proteomes" id="UP000006386">
    <property type="component" value="Chromosome"/>
</dbReference>
<dbReference type="GO" id="GO:0050566">
    <property type="term" value="F:asparaginyl-tRNA synthase (glutamine-hydrolyzing) activity"/>
    <property type="evidence" value="ECO:0007669"/>
    <property type="project" value="RHEA"/>
</dbReference>
<dbReference type="GO" id="GO:0005524">
    <property type="term" value="F:ATP binding"/>
    <property type="evidence" value="ECO:0007669"/>
    <property type="project" value="UniProtKB-KW"/>
</dbReference>
<dbReference type="GO" id="GO:0050567">
    <property type="term" value="F:glutaminyl-tRNA synthase (glutamine-hydrolyzing) activity"/>
    <property type="evidence" value="ECO:0007669"/>
    <property type="project" value="UniProtKB-UniRule"/>
</dbReference>
<dbReference type="GO" id="GO:0070681">
    <property type="term" value="P:glutaminyl-tRNAGln biosynthesis via transamidation"/>
    <property type="evidence" value="ECO:0007669"/>
    <property type="project" value="TreeGrafter"/>
</dbReference>
<dbReference type="GO" id="GO:0006412">
    <property type="term" value="P:translation"/>
    <property type="evidence" value="ECO:0007669"/>
    <property type="project" value="UniProtKB-UniRule"/>
</dbReference>
<dbReference type="FunFam" id="1.10.10.410:FF:000001">
    <property type="entry name" value="Aspartyl/glutamyl-tRNA(Asn/Gln) amidotransferase subunit B"/>
    <property type="match status" value="1"/>
</dbReference>
<dbReference type="FunFam" id="1.10.150.380:FF:000001">
    <property type="entry name" value="Aspartyl/glutamyl-tRNA(Asn/Gln) amidotransferase subunit B"/>
    <property type="match status" value="1"/>
</dbReference>
<dbReference type="Gene3D" id="1.10.10.410">
    <property type="match status" value="1"/>
</dbReference>
<dbReference type="Gene3D" id="1.10.150.380">
    <property type="entry name" value="GatB domain, N-terminal subdomain"/>
    <property type="match status" value="1"/>
</dbReference>
<dbReference type="HAMAP" id="MF_00121">
    <property type="entry name" value="GatB"/>
    <property type="match status" value="1"/>
</dbReference>
<dbReference type="InterPro" id="IPR017959">
    <property type="entry name" value="Asn/Gln-tRNA_amidoTrfase_suB/E"/>
</dbReference>
<dbReference type="InterPro" id="IPR006075">
    <property type="entry name" value="Asn/Gln-tRNA_Trfase_suB/E_cat"/>
</dbReference>
<dbReference type="InterPro" id="IPR018027">
    <property type="entry name" value="Asn/Gln_amidotransferase"/>
</dbReference>
<dbReference type="InterPro" id="IPR003789">
    <property type="entry name" value="Asn/Gln_tRNA_amidoTrase-B-like"/>
</dbReference>
<dbReference type="InterPro" id="IPR004413">
    <property type="entry name" value="GatB"/>
</dbReference>
<dbReference type="InterPro" id="IPR042114">
    <property type="entry name" value="GatB_C_1"/>
</dbReference>
<dbReference type="InterPro" id="IPR023168">
    <property type="entry name" value="GatB_Yqey_C_2"/>
</dbReference>
<dbReference type="InterPro" id="IPR017958">
    <property type="entry name" value="Gln-tRNA_amidoTrfase_suB_CS"/>
</dbReference>
<dbReference type="InterPro" id="IPR014746">
    <property type="entry name" value="Gln_synth/guanido_kin_cat_dom"/>
</dbReference>
<dbReference type="NCBIfam" id="TIGR00133">
    <property type="entry name" value="gatB"/>
    <property type="match status" value="1"/>
</dbReference>
<dbReference type="NCBIfam" id="NF004011">
    <property type="entry name" value="PRK05477.1-1"/>
    <property type="match status" value="1"/>
</dbReference>
<dbReference type="NCBIfam" id="NF004012">
    <property type="entry name" value="PRK05477.1-2"/>
    <property type="match status" value="1"/>
</dbReference>
<dbReference type="NCBIfam" id="NF004014">
    <property type="entry name" value="PRK05477.1-4"/>
    <property type="match status" value="1"/>
</dbReference>
<dbReference type="PANTHER" id="PTHR11659">
    <property type="entry name" value="GLUTAMYL-TRNA GLN AMIDOTRANSFERASE SUBUNIT B MITOCHONDRIAL AND PROKARYOTIC PET112-RELATED"/>
    <property type="match status" value="1"/>
</dbReference>
<dbReference type="PANTHER" id="PTHR11659:SF0">
    <property type="entry name" value="GLUTAMYL-TRNA(GLN) AMIDOTRANSFERASE SUBUNIT B, MITOCHONDRIAL"/>
    <property type="match status" value="1"/>
</dbReference>
<dbReference type="Pfam" id="PF02934">
    <property type="entry name" value="GatB_N"/>
    <property type="match status" value="1"/>
</dbReference>
<dbReference type="Pfam" id="PF02637">
    <property type="entry name" value="GatB_Yqey"/>
    <property type="match status" value="1"/>
</dbReference>
<dbReference type="SMART" id="SM00845">
    <property type="entry name" value="GatB_Yqey"/>
    <property type="match status" value="1"/>
</dbReference>
<dbReference type="SUPFAM" id="SSF89095">
    <property type="entry name" value="GatB/YqeY motif"/>
    <property type="match status" value="1"/>
</dbReference>
<dbReference type="SUPFAM" id="SSF55931">
    <property type="entry name" value="Glutamine synthetase/guanido kinase"/>
    <property type="match status" value="1"/>
</dbReference>
<dbReference type="PROSITE" id="PS01234">
    <property type="entry name" value="GATB"/>
    <property type="match status" value="1"/>
</dbReference>
<accession>A6QIC7</accession>
<gene>
    <name evidence="1" type="primary">gatB</name>
    <name type="ordered locus">NWMN_1837</name>
</gene>